<feature type="chain" id="PRO_1000069368" description="ADP-L-glycero-D-manno-heptose-6-epimerase">
    <location>
        <begin position="1"/>
        <end position="317"/>
    </location>
</feature>
<feature type="active site" description="Proton acceptor" evidence="1">
    <location>
        <position position="139"/>
    </location>
</feature>
<feature type="active site" description="Proton acceptor" evidence="1">
    <location>
        <position position="175"/>
    </location>
</feature>
<feature type="binding site" evidence="1">
    <location>
        <begin position="10"/>
        <end position="11"/>
    </location>
    <ligand>
        <name>NADP(+)</name>
        <dbReference type="ChEBI" id="CHEBI:58349"/>
    </ligand>
</feature>
<feature type="binding site" evidence="1">
    <location>
        <begin position="31"/>
        <end position="32"/>
    </location>
    <ligand>
        <name>NADP(+)</name>
        <dbReference type="ChEBI" id="CHEBI:58349"/>
    </ligand>
</feature>
<feature type="binding site" evidence="1">
    <location>
        <position position="38"/>
    </location>
    <ligand>
        <name>NADP(+)</name>
        <dbReference type="ChEBI" id="CHEBI:58349"/>
    </ligand>
</feature>
<feature type="binding site" evidence="1">
    <location>
        <position position="53"/>
    </location>
    <ligand>
        <name>NADP(+)</name>
        <dbReference type="ChEBI" id="CHEBI:58349"/>
    </ligand>
</feature>
<feature type="binding site" evidence="1">
    <location>
        <begin position="75"/>
        <end position="79"/>
    </location>
    <ligand>
        <name>NADP(+)</name>
        <dbReference type="ChEBI" id="CHEBI:58349"/>
    </ligand>
</feature>
<feature type="binding site" evidence="1">
    <location>
        <position position="92"/>
    </location>
    <ligand>
        <name>NADP(+)</name>
        <dbReference type="ChEBI" id="CHEBI:58349"/>
    </ligand>
</feature>
<feature type="binding site" evidence="1">
    <location>
        <position position="143"/>
    </location>
    <ligand>
        <name>NADP(+)</name>
        <dbReference type="ChEBI" id="CHEBI:58349"/>
    </ligand>
</feature>
<feature type="binding site" evidence="1">
    <location>
        <position position="166"/>
    </location>
    <ligand>
        <name>substrate</name>
    </ligand>
</feature>
<feature type="binding site" evidence="1">
    <location>
        <position position="167"/>
    </location>
    <ligand>
        <name>NADP(+)</name>
        <dbReference type="ChEBI" id="CHEBI:58349"/>
    </ligand>
</feature>
<feature type="binding site" evidence="1">
    <location>
        <position position="175"/>
    </location>
    <ligand>
        <name>NADP(+)</name>
        <dbReference type="ChEBI" id="CHEBI:58349"/>
    </ligand>
</feature>
<feature type="binding site" evidence="1">
    <location>
        <position position="177"/>
    </location>
    <ligand>
        <name>substrate</name>
    </ligand>
</feature>
<feature type="binding site" evidence="1">
    <location>
        <position position="184"/>
    </location>
    <ligand>
        <name>substrate</name>
    </ligand>
</feature>
<feature type="binding site" evidence="1">
    <location>
        <begin position="198"/>
        <end position="201"/>
    </location>
    <ligand>
        <name>substrate</name>
    </ligand>
</feature>
<feature type="binding site" evidence="1">
    <location>
        <position position="211"/>
    </location>
    <ligand>
        <name>substrate</name>
    </ligand>
</feature>
<feature type="binding site" evidence="1">
    <location>
        <position position="275"/>
    </location>
    <ligand>
        <name>substrate</name>
    </ligand>
</feature>
<reference key="1">
    <citation type="submission" date="2007-03" db="EMBL/GenBank/DDBJ databases">
        <title>Complete sequence of Shewanella loihica PV-4.</title>
        <authorList>
            <consortium name="US DOE Joint Genome Institute"/>
            <person name="Copeland A."/>
            <person name="Lucas S."/>
            <person name="Lapidus A."/>
            <person name="Barry K."/>
            <person name="Detter J.C."/>
            <person name="Glavina del Rio T."/>
            <person name="Hammon N."/>
            <person name="Israni S."/>
            <person name="Dalin E."/>
            <person name="Tice H."/>
            <person name="Pitluck S."/>
            <person name="Chain P."/>
            <person name="Malfatti S."/>
            <person name="Shin M."/>
            <person name="Vergez L."/>
            <person name="Schmutz J."/>
            <person name="Larimer F."/>
            <person name="Land M."/>
            <person name="Hauser L."/>
            <person name="Kyrpides N."/>
            <person name="Mikhailova N."/>
            <person name="Romine M.F."/>
            <person name="Serres G."/>
            <person name="Fredrickson J."/>
            <person name="Tiedje J."/>
            <person name="Richardson P."/>
        </authorList>
    </citation>
    <scope>NUCLEOTIDE SEQUENCE [LARGE SCALE GENOMIC DNA]</scope>
    <source>
        <strain>ATCC BAA-1088 / PV-4</strain>
    </source>
</reference>
<protein>
    <recommendedName>
        <fullName evidence="1">ADP-L-glycero-D-manno-heptose-6-epimerase</fullName>
        <ecNumber evidence="1">5.1.3.20</ecNumber>
    </recommendedName>
    <alternativeName>
        <fullName evidence="1">ADP-L-glycero-beta-D-manno-heptose-6-epimerase</fullName>
        <shortName evidence="1">ADP-glyceromanno-heptose 6-epimerase</shortName>
        <shortName evidence="1">ADP-hep 6-epimerase</shortName>
        <shortName evidence="1">AGME</shortName>
    </alternativeName>
</protein>
<sequence>MIIVTGAAGFIGSNLVKALNNLGRSDIIAVDDLTDGTKMFNLADCEIADYLDKADFIEQIAQGQFDGKVEVIFHQGACSSTTEWDGKFMMANNYEYSKTLLHFCERNGSQFIYASSASVYGGSDKFIEQRELEKPLNVYAYSKFLFDQYVRQHNFTTQVAGLRYFNVYGPREQHKGGMASVAFHFNNQIKASGICRLFQGHDGFEDGKQLRDFVYVEDVVKVNLWLWQNPGISGVYNCGTGQAQSFNDVANAVIAYHGKGEIEYIPFPDKLKGAYQSYTQADLTQLRAAGYTQAFKTVEEGVPEYLDWLAAQHFIGQ</sequence>
<proteinExistence type="inferred from homology"/>
<dbReference type="EC" id="5.1.3.20" evidence="1"/>
<dbReference type="EMBL" id="CP000606">
    <property type="protein sequence ID" value="ABO25560.1"/>
    <property type="molecule type" value="Genomic_DNA"/>
</dbReference>
<dbReference type="RefSeq" id="WP_011867488.1">
    <property type="nucleotide sequence ID" value="NC_009092.1"/>
</dbReference>
<dbReference type="SMR" id="A3QJB2"/>
<dbReference type="STRING" id="323850.Shew_3694"/>
<dbReference type="KEGG" id="slo:Shew_3694"/>
<dbReference type="eggNOG" id="COG0451">
    <property type="taxonomic scope" value="Bacteria"/>
</dbReference>
<dbReference type="HOGENOM" id="CLU_007383_1_3_6"/>
<dbReference type="OrthoDB" id="9803010at2"/>
<dbReference type="UniPathway" id="UPA00356">
    <property type="reaction ID" value="UER00440"/>
</dbReference>
<dbReference type="Proteomes" id="UP000001558">
    <property type="component" value="Chromosome"/>
</dbReference>
<dbReference type="GO" id="GO:0008712">
    <property type="term" value="F:ADP-glyceromanno-heptose 6-epimerase activity"/>
    <property type="evidence" value="ECO:0007669"/>
    <property type="project" value="UniProtKB-UniRule"/>
</dbReference>
<dbReference type="GO" id="GO:0050661">
    <property type="term" value="F:NADP binding"/>
    <property type="evidence" value="ECO:0007669"/>
    <property type="project" value="InterPro"/>
</dbReference>
<dbReference type="GO" id="GO:0097171">
    <property type="term" value="P:ADP-L-glycero-beta-D-manno-heptose biosynthetic process"/>
    <property type="evidence" value="ECO:0007669"/>
    <property type="project" value="UniProtKB-UniPathway"/>
</dbReference>
<dbReference type="GO" id="GO:0005975">
    <property type="term" value="P:carbohydrate metabolic process"/>
    <property type="evidence" value="ECO:0007669"/>
    <property type="project" value="UniProtKB-UniRule"/>
</dbReference>
<dbReference type="CDD" id="cd05248">
    <property type="entry name" value="ADP_GME_SDR_e"/>
    <property type="match status" value="1"/>
</dbReference>
<dbReference type="Gene3D" id="3.40.50.720">
    <property type="entry name" value="NAD(P)-binding Rossmann-like Domain"/>
    <property type="match status" value="1"/>
</dbReference>
<dbReference type="Gene3D" id="3.90.25.10">
    <property type="entry name" value="UDP-galactose 4-epimerase, domain 1"/>
    <property type="match status" value="1"/>
</dbReference>
<dbReference type="HAMAP" id="MF_01601">
    <property type="entry name" value="Heptose_epimerase"/>
    <property type="match status" value="1"/>
</dbReference>
<dbReference type="InterPro" id="IPR001509">
    <property type="entry name" value="Epimerase_deHydtase"/>
</dbReference>
<dbReference type="InterPro" id="IPR011912">
    <property type="entry name" value="Heptose_epim"/>
</dbReference>
<dbReference type="InterPro" id="IPR036291">
    <property type="entry name" value="NAD(P)-bd_dom_sf"/>
</dbReference>
<dbReference type="NCBIfam" id="TIGR02197">
    <property type="entry name" value="heptose_epim"/>
    <property type="match status" value="1"/>
</dbReference>
<dbReference type="NCBIfam" id="NF008360">
    <property type="entry name" value="PRK11150.1"/>
    <property type="match status" value="1"/>
</dbReference>
<dbReference type="PANTHER" id="PTHR43103:SF3">
    <property type="entry name" value="ADP-L-GLYCERO-D-MANNO-HEPTOSE-6-EPIMERASE"/>
    <property type="match status" value="1"/>
</dbReference>
<dbReference type="PANTHER" id="PTHR43103">
    <property type="entry name" value="NUCLEOSIDE-DIPHOSPHATE-SUGAR EPIMERASE"/>
    <property type="match status" value="1"/>
</dbReference>
<dbReference type="Pfam" id="PF01370">
    <property type="entry name" value="Epimerase"/>
    <property type="match status" value="1"/>
</dbReference>
<dbReference type="SUPFAM" id="SSF51735">
    <property type="entry name" value="NAD(P)-binding Rossmann-fold domains"/>
    <property type="match status" value="1"/>
</dbReference>
<evidence type="ECO:0000255" key="1">
    <source>
        <dbReference type="HAMAP-Rule" id="MF_01601"/>
    </source>
</evidence>
<keyword id="KW-0119">Carbohydrate metabolism</keyword>
<keyword id="KW-0413">Isomerase</keyword>
<keyword id="KW-0521">NADP</keyword>
<keyword id="KW-1185">Reference proteome</keyword>
<name>HLDD_SHELP</name>
<comment type="function">
    <text evidence="1">Catalyzes the interconversion between ADP-D-glycero-beta-D-manno-heptose and ADP-L-glycero-beta-D-manno-heptose via an epimerization at carbon 6 of the heptose.</text>
</comment>
<comment type="catalytic activity">
    <reaction evidence="1">
        <text>ADP-D-glycero-beta-D-manno-heptose = ADP-L-glycero-beta-D-manno-heptose</text>
        <dbReference type="Rhea" id="RHEA:17577"/>
        <dbReference type="ChEBI" id="CHEBI:59967"/>
        <dbReference type="ChEBI" id="CHEBI:61506"/>
        <dbReference type="EC" id="5.1.3.20"/>
    </reaction>
</comment>
<comment type="cofactor">
    <cofactor evidence="1">
        <name>NADP(+)</name>
        <dbReference type="ChEBI" id="CHEBI:58349"/>
    </cofactor>
    <text evidence="1">Binds 1 NADP(+) per subunit.</text>
</comment>
<comment type="pathway">
    <text evidence="1">Nucleotide-sugar biosynthesis; ADP-L-glycero-beta-D-manno-heptose biosynthesis; ADP-L-glycero-beta-D-manno-heptose from D-glycero-beta-D-manno-heptose 7-phosphate: step 4/4.</text>
</comment>
<comment type="subunit">
    <text evidence="1">Homopentamer.</text>
</comment>
<comment type="domain">
    <text evidence="1">Contains a large N-terminal NADP-binding domain, and a smaller C-terminal substrate-binding domain.</text>
</comment>
<comment type="similarity">
    <text evidence="1">Belongs to the NAD(P)-dependent epimerase/dehydratase family. HldD subfamily.</text>
</comment>
<accession>A3QJB2</accession>
<gene>
    <name evidence="1" type="primary">hldD</name>
    <name type="ordered locus">Shew_3694</name>
</gene>
<organism>
    <name type="scientific">Shewanella loihica (strain ATCC BAA-1088 / PV-4)</name>
    <dbReference type="NCBI Taxonomy" id="323850"/>
    <lineage>
        <taxon>Bacteria</taxon>
        <taxon>Pseudomonadati</taxon>
        <taxon>Pseudomonadota</taxon>
        <taxon>Gammaproteobacteria</taxon>
        <taxon>Alteromonadales</taxon>
        <taxon>Shewanellaceae</taxon>
        <taxon>Shewanella</taxon>
    </lineage>
</organism>